<gene>
    <name evidence="1" type="primary">mdtB</name>
    <name type="ordered locus">YPTB2814</name>
</gene>
<organism>
    <name type="scientific">Yersinia pseudotuberculosis serotype I (strain IP32953)</name>
    <dbReference type="NCBI Taxonomy" id="273123"/>
    <lineage>
        <taxon>Bacteria</taxon>
        <taxon>Pseudomonadati</taxon>
        <taxon>Pseudomonadota</taxon>
        <taxon>Gammaproteobacteria</taxon>
        <taxon>Enterobacterales</taxon>
        <taxon>Yersiniaceae</taxon>
        <taxon>Yersinia</taxon>
    </lineage>
</organism>
<comment type="subunit">
    <text evidence="1">Part of a tripartite efflux system composed of MdtA, MdtB and MdtC. MdtB forms a heteromultimer with MdtC.</text>
</comment>
<comment type="subcellular location">
    <subcellularLocation>
        <location evidence="1">Cell inner membrane</location>
        <topology evidence="1">Multi-pass membrane protein</topology>
    </subcellularLocation>
</comment>
<comment type="similarity">
    <text evidence="1">Belongs to the resistance-nodulation-cell division (RND) (TC 2.A.6) family. MdtB subfamily.</text>
</comment>
<reference key="1">
    <citation type="journal article" date="2004" name="Proc. Natl. Acad. Sci. U.S.A.">
        <title>Insights into the evolution of Yersinia pestis through whole-genome comparison with Yersinia pseudotuberculosis.</title>
        <authorList>
            <person name="Chain P.S.G."/>
            <person name="Carniel E."/>
            <person name="Larimer F.W."/>
            <person name="Lamerdin J."/>
            <person name="Stoutland P.O."/>
            <person name="Regala W.M."/>
            <person name="Georgescu A.M."/>
            <person name="Vergez L.M."/>
            <person name="Land M.L."/>
            <person name="Motin V.L."/>
            <person name="Brubaker R.R."/>
            <person name="Fowler J."/>
            <person name="Hinnebusch J."/>
            <person name="Marceau M."/>
            <person name="Medigue C."/>
            <person name="Simonet M."/>
            <person name="Chenal-Francisque V."/>
            <person name="Souza B."/>
            <person name="Dacheux D."/>
            <person name="Elliott J.M."/>
            <person name="Derbise A."/>
            <person name="Hauser L.J."/>
            <person name="Garcia E."/>
        </authorList>
    </citation>
    <scope>NUCLEOTIDE SEQUENCE [LARGE SCALE GENOMIC DNA]</scope>
    <source>
        <strain>IP32953</strain>
    </source>
</reference>
<dbReference type="EMBL" id="BX936398">
    <property type="protein sequence ID" value="CAH22052.1"/>
    <property type="molecule type" value="Genomic_DNA"/>
</dbReference>
<dbReference type="RefSeq" id="WP_011192782.1">
    <property type="nucleotide sequence ID" value="NC_006155.1"/>
</dbReference>
<dbReference type="SMR" id="Q668C6"/>
<dbReference type="GeneID" id="49785175"/>
<dbReference type="KEGG" id="ypo:BZ17_3817"/>
<dbReference type="KEGG" id="yps:YPTB2814"/>
<dbReference type="PATRIC" id="fig|273123.14.peg.4006"/>
<dbReference type="Proteomes" id="UP000001011">
    <property type="component" value="Chromosome"/>
</dbReference>
<dbReference type="GO" id="GO:0005886">
    <property type="term" value="C:plasma membrane"/>
    <property type="evidence" value="ECO:0007669"/>
    <property type="project" value="UniProtKB-SubCell"/>
</dbReference>
<dbReference type="GO" id="GO:0042910">
    <property type="term" value="F:xenobiotic transmembrane transporter activity"/>
    <property type="evidence" value="ECO:0007669"/>
    <property type="project" value="TreeGrafter"/>
</dbReference>
<dbReference type="FunFam" id="1.20.1640.10:FF:000001">
    <property type="entry name" value="Efflux pump membrane transporter"/>
    <property type="match status" value="1"/>
</dbReference>
<dbReference type="FunFam" id="3.30.70.1430:FF:000001">
    <property type="entry name" value="Efflux pump membrane transporter"/>
    <property type="match status" value="1"/>
</dbReference>
<dbReference type="Gene3D" id="3.30.70.1430">
    <property type="entry name" value="Multidrug efflux transporter AcrB pore domain"/>
    <property type="match status" value="2"/>
</dbReference>
<dbReference type="Gene3D" id="3.30.70.1440">
    <property type="entry name" value="Multidrug efflux transporter AcrB pore domain"/>
    <property type="match status" value="1"/>
</dbReference>
<dbReference type="Gene3D" id="3.30.70.1320">
    <property type="entry name" value="Multidrug efflux transporter AcrB pore domain like"/>
    <property type="match status" value="1"/>
</dbReference>
<dbReference type="Gene3D" id="3.30.2090.10">
    <property type="entry name" value="Multidrug efflux transporter AcrB TolC docking domain, DN and DC subdomains"/>
    <property type="match status" value="2"/>
</dbReference>
<dbReference type="Gene3D" id="1.20.1640.10">
    <property type="entry name" value="Multidrug efflux transporter AcrB transmembrane domain"/>
    <property type="match status" value="2"/>
</dbReference>
<dbReference type="HAMAP" id="MF_01423">
    <property type="entry name" value="MdtB"/>
    <property type="match status" value="1"/>
</dbReference>
<dbReference type="InterPro" id="IPR027463">
    <property type="entry name" value="AcrB_DN_DC_subdom"/>
</dbReference>
<dbReference type="InterPro" id="IPR001036">
    <property type="entry name" value="Acrflvin-R"/>
</dbReference>
<dbReference type="InterPro" id="IPR022831">
    <property type="entry name" value="Multidrug-R_MdtB"/>
</dbReference>
<dbReference type="NCBIfam" id="NF007798">
    <property type="entry name" value="PRK10503.1"/>
    <property type="match status" value="1"/>
</dbReference>
<dbReference type="NCBIfam" id="NF033617">
    <property type="entry name" value="RND_permease_2"/>
    <property type="match status" value="1"/>
</dbReference>
<dbReference type="PANTHER" id="PTHR32063">
    <property type="match status" value="1"/>
</dbReference>
<dbReference type="PANTHER" id="PTHR32063:SF21">
    <property type="entry name" value="MULTIDRUG RESISTANCE PROTEIN MDTB"/>
    <property type="match status" value="1"/>
</dbReference>
<dbReference type="Pfam" id="PF00873">
    <property type="entry name" value="ACR_tran"/>
    <property type="match status" value="1"/>
</dbReference>
<dbReference type="PRINTS" id="PR00702">
    <property type="entry name" value="ACRIFLAVINRP"/>
</dbReference>
<dbReference type="SUPFAM" id="SSF82693">
    <property type="entry name" value="Multidrug efflux transporter AcrB pore domain, PN1, PN2, PC1 and PC2 subdomains"/>
    <property type="match status" value="3"/>
</dbReference>
<dbReference type="SUPFAM" id="SSF82714">
    <property type="entry name" value="Multidrug efflux transporter AcrB TolC docking domain, DN and DC subdomains"/>
    <property type="match status" value="2"/>
</dbReference>
<dbReference type="SUPFAM" id="SSF82866">
    <property type="entry name" value="Multidrug efflux transporter AcrB transmembrane domain"/>
    <property type="match status" value="2"/>
</dbReference>
<sequence>MQVMPPTPGGGPSRLFILRPVATTLFMIAILLAGIIGYRALPVSALPEVDYPTIQVVTLYPGASPDVVTSSITAPLERQFGQMSGLKQMASQSSGGASVITLQFQLTLPLDVAEQEVQAAINAATNLLPSDLPYPPIYNKVNPADPPILTLAVTATAIPMTQVEDMVETRIAQKISQVTGVGLVTLSGGQRPAVRVKLNAPAVAALGLDSETIRTAISNANVNSAKGSLDGPTRSVTLSANDQMKSAEEYRDLIIAYQNGAPIRLQDVATIEQGAENNKLAAWANTQSAIVLNIQRQPGVNVIATADSIREMLPELIKSLPKSVDVKVLTDRTSTIRASVNDVQFELLLAIALVVMVIYLFLRNAAATIIPSIAVPLSLVGTFAAMYFLGFSINNLTLMALTIATGFVVDDAIVVIENISRYIEKGEKPLDAALKGAGEIGFTIISLTFSLIAVLIPLLFMEDIVGRLFREFAVTLAVAILISAVVSLTLTPMMCARMLSYESLRKQNRLSRASEKFFDWVIAHYAVALKKVLNHPWLTLSVAFSTLVLTVILYLLIPKGFFPLQDNGLIQGTLEAPQSVSFSNMAERQQQVAAIILKDPAVESLTSFVGVDGTNATLNNGRLQINLKPLSERDDRIPQIITRLQESVSGVPGIKLYLQPVQDLTIDTQLSRTQYQFTLQATSLEELSTWVPKLVNELQQKAPFQDVTSDWQDQGLVAFVNVDRDSASRLGITMAAIDNALYNAFGQRLISTIYTQSNQYRVVLEHDVQATPGLAAFNDIRLTGSDGKGVPLNSIATIEERFGPLSINHLNQFPSATVSFNLAQGYSLGEAVAAVTLAEKEIQLPADITTRFQGSTLAFQAALGSTLWLIIAAIVAMYIVLGVLYESFIHPITILSTLPTAGVGALLALMLTGNELDVIAIIGIILLIGIVKKNAIMMIDFALAAERDQGMTPYDAIYQACLLRFRPILMTTLAALFGALPLMLSTGVGAELRQPLGVCMVGGLIVSQVLTLFTTPVIYLLFDKLARNTRGKNRHRDEDIDSSELLNGQEPQ</sequence>
<evidence type="ECO:0000255" key="1">
    <source>
        <dbReference type="HAMAP-Rule" id="MF_01423"/>
    </source>
</evidence>
<evidence type="ECO:0000256" key="2">
    <source>
        <dbReference type="SAM" id="MobiDB-lite"/>
    </source>
</evidence>
<feature type="chain" id="PRO_0000161830" description="Multidrug resistance protein MdtB">
    <location>
        <begin position="1"/>
        <end position="1052"/>
    </location>
</feature>
<feature type="transmembrane region" description="Helical" evidence="1">
    <location>
        <begin position="15"/>
        <end position="37"/>
    </location>
</feature>
<feature type="transmembrane region" description="Helical" evidence="1">
    <location>
        <begin position="345"/>
        <end position="362"/>
    </location>
</feature>
<feature type="transmembrane region" description="Helical" evidence="1">
    <location>
        <begin position="367"/>
        <end position="389"/>
    </location>
</feature>
<feature type="transmembrane region" description="Helical" evidence="1">
    <location>
        <begin position="396"/>
        <end position="418"/>
    </location>
</feature>
<feature type="transmembrane region" description="Helical" evidence="1">
    <location>
        <begin position="438"/>
        <end position="460"/>
    </location>
</feature>
<feature type="transmembrane region" description="Helical" evidence="1">
    <location>
        <begin position="472"/>
        <end position="494"/>
    </location>
</feature>
<feature type="transmembrane region" description="Helical" evidence="1">
    <location>
        <begin position="535"/>
        <end position="557"/>
    </location>
</feature>
<feature type="transmembrane region" description="Helical" evidence="1">
    <location>
        <begin position="867"/>
        <end position="889"/>
    </location>
</feature>
<feature type="transmembrane region" description="Helical" evidence="1">
    <location>
        <begin position="909"/>
        <end position="931"/>
    </location>
</feature>
<feature type="transmembrane region" description="Helical" evidence="1">
    <location>
        <begin position="968"/>
        <end position="990"/>
    </location>
</feature>
<feature type="transmembrane region" description="Helical" evidence="1">
    <location>
        <begin position="1000"/>
        <end position="1022"/>
    </location>
</feature>
<feature type="region of interest" description="Disordered" evidence="2">
    <location>
        <begin position="1032"/>
        <end position="1052"/>
    </location>
</feature>
<proteinExistence type="inferred from homology"/>
<accession>Q668C6</accession>
<protein>
    <recommendedName>
        <fullName evidence="1">Multidrug resistance protein MdtB</fullName>
    </recommendedName>
    <alternativeName>
        <fullName evidence="1">Multidrug transporter MdtB</fullName>
    </alternativeName>
</protein>
<name>MDTB_YERPS</name>
<keyword id="KW-0997">Cell inner membrane</keyword>
<keyword id="KW-1003">Cell membrane</keyword>
<keyword id="KW-0472">Membrane</keyword>
<keyword id="KW-0812">Transmembrane</keyword>
<keyword id="KW-1133">Transmembrane helix</keyword>
<keyword id="KW-0813">Transport</keyword>